<dbReference type="EMBL" id="CP001657">
    <property type="protein sequence ID" value="ACT14821.1"/>
    <property type="molecule type" value="Genomic_DNA"/>
</dbReference>
<dbReference type="RefSeq" id="WP_010286111.1">
    <property type="nucleotide sequence ID" value="NC_012917.1"/>
</dbReference>
<dbReference type="SMR" id="C6DG58"/>
<dbReference type="STRING" id="561230.PC1_3806"/>
<dbReference type="GeneID" id="67792297"/>
<dbReference type="KEGG" id="pct:PC1_3806"/>
<dbReference type="eggNOG" id="COG0256">
    <property type="taxonomic scope" value="Bacteria"/>
</dbReference>
<dbReference type="HOGENOM" id="CLU_098841_0_1_6"/>
<dbReference type="OrthoDB" id="9810939at2"/>
<dbReference type="Proteomes" id="UP000002736">
    <property type="component" value="Chromosome"/>
</dbReference>
<dbReference type="GO" id="GO:0022625">
    <property type="term" value="C:cytosolic large ribosomal subunit"/>
    <property type="evidence" value="ECO:0007669"/>
    <property type="project" value="TreeGrafter"/>
</dbReference>
<dbReference type="GO" id="GO:0008097">
    <property type="term" value="F:5S rRNA binding"/>
    <property type="evidence" value="ECO:0007669"/>
    <property type="project" value="TreeGrafter"/>
</dbReference>
<dbReference type="GO" id="GO:0003735">
    <property type="term" value="F:structural constituent of ribosome"/>
    <property type="evidence" value="ECO:0007669"/>
    <property type="project" value="InterPro"/>
</dbReference>
<dbReference type="GO" id="GO:0006412">
    <property type="term" value="P:translation"/>
    <property type="evidence" value="ECO:0007669"/>
    <property type="project" value="UniProtKB-UniRule"/>
</dbReference>
<dbReference type="CDD" id="cd00432">
    <property type="entry name" value="Ribosomal_L18_L5e"/>
    <property type="match status" value="1"/>
</dbReference>
<dbReference type="FunFam" id="3.30.420.100:FF:000001">
    <property type="entry name" value="50S ribosomal protein L18"/>
    <property type="match status" value="1"/>
</dbReference>
<dbReference type="Gene3D" id="3.30.420.100">
    <property type="match status" value="1"/>
</dbReference>
<dbReference type="HAMAP" id="MF_01337_B">
    <property type="entry name" value="Ribosomal_uL18_B"/>
    <property type="match status" value="1"/>
</dbReference>
<dbReference type="InterPro" id="IPR004389">
    <property type="entry name" value="Ribosomal_uL18_bac-type"/>
</dbReference>
<dbReference type="InterPro" id="IPR005484">
    <property type="entry name" value="Ribosomal_uL18_bac/euk"/>
</dbReference>
<dbReference type="NCBIfam" id="TIGR00060">
    <property type="entry name" value="L18_bact"/>
    <property type="match status" value="1"/>
</dbReference>
<dbReference type="PANTHER" id="PTHR12899">
    <property type="entry name" value="39S RIBOSOMAL PROTEIN L18, MITOCHONDRIAL"/>
    <property type="match status" value="1"/>
</dbReference>
<dbReference type="PANTHER" id="PTHR12899:SF3">
    <property type="entry name" value="LARGE RIBOSOMAL SUBUNIT PROTEIN UL18M"/>
    <property type="match status" value="1"/>
</dbReference>
<dbReference type="Pfam" id="PF00861">
    <property type="entry name" value="Ribosomal_L18p"/>
    <property type="match status" value="1"/>
</dbReference>
<dbReference type="SUPFAM" id="SSF53137">
    <property type="entry name" value="Translational machinery components"/>
    <property type="match status" value="1"/>
</dbReference>
<reference key="1">
    <citation type="submission" date="2009-07" db="EMBL/GenBank/DDBJ databases">
        <title>Complete sequence of Pectobacterium carotovorum subsp. carotovorum PC1.</title>
        <authorList>
            <consortium name="US DOE Joint Genome Institute"/>
            <person name="Lucas S."/>
            <person name="Copeland A."/>
            <person name="Lapidus A."/>
            <person name="Glavina del Rio T."/>
            <person name="Tice H."/>
            <person name="Bruce D."/>
            <person name="Goodwin L."/>
            <person name="Pitluck S."/>
            <person name="Munk A.C."/>
            <person name="Brettin T."/>
            <person name="Detter J.C."/>
            <person name="Han C."/>
            <person name="Tapia R."/>
            <person name="Larimer F."/>
            <person name="Land M."/>
            <person name="Hauser L."/>
            <person name="Kyrpides N."/>
            <person name="Mikhailova N."/>
            <person name="Balakrishnan V."/>
            <person name="Glasner J."/>
            <person name="Perna N.T."/>
        </authorList>
    </citation>
    <scope>NUCLEOTIDE SEQUENCE [LARGE SCALE GENOMIC DNA]</scope>
    <source>
        <strain>PC1</strain>
    </source>
</reference>
<comment type="function">
    <text evidence="1">This is one of the proteins that bind and probably mediate the attachment of the 5S RNA into the large ribosomal subunit, where it forms part of the central protuberance.</text>
</comment>
<comment type="subunit">
    <text evidence="1">Part of the 50S ribosomal subunit; part of the 5S rRNA/L5/L18/L25 subcomplex. Contacts the 5S and 23S rRNAs.</text>
</comment>
<comment type="similarity">
    <text evidence="1">Belongs to the universal ribosomal protein uL18 family.</text>
</comment>
<feature type="chain" id="PRO_1000214679" description="Large ribosomal subunit protein uL18">
    <location>
        <begin position="1"/>
        <end position="117"/>
    </location>
</feature>
<proteinExistence type="inferred from homology"/>
<name>RL18_PECCP</name>
<accession>C6DG58</accession>
<protein>
    <recommendedName>
        <fullName evidence="1">Large ribosomal subunit protein uL18</fullName>
    </recommendedName>
    <alternativeName>
        <fullName evidence="2">50S ribosomal protein L18</fullName>
    </alternativeName>
</protein>
<evidence type="ECO:0000255" key="1">
    <source>
        <dbReference type="HAMAP-Rule" id="MF_01337"/>
    </source>
</evidence>
<evidence type="ECO:0000305" key="2"/>
<organism>
    <name type="scientific">Pectobacterium carotovorum subsp. carotovorum (strain PC1)</name>
    <dbReference type="NCBI Taxonomy" id="561230"/>
    <lineage>
        <taxon>Bacteria</taxon>
        <taxon>Pseudomonadati</taxon>
        <taxon>Pseudomonadota</taxon>
        <taxon>Gammaproteobacteria</taxon>
        <taxon>Enterobacterales</taxon>
        <taxon>Pectobacteriaceae</taxon>
        <taxon>Pectobacterium</taxon>
    </lineage>
</organism>
<sequence>MDKKAARIRRATRARRKLQELGATRLVVHRTPRHIYAQVIAPNGSEVLVAASTVEKAIAEQLKSTGNKDAASAIGKAIAERALEKGIKDVSFDRSGFQYHGRVQALADAAREAGLQF</sequence>
<gene>
    <name evidence="1" type="primary">rplR</name>
    <name type="ordered locus">PC1_3806</name>
</gene>
<keyword id="KW-0687">Ribonucleoprotein</keyword>
<keyword id="KW-0689">Ribosomal protein</keyword>
<keyword id="KW-0694">RNA-binding</keyword>
<keyword id="KW-0699">rRNA-binding</keyword>